<organism>
    <name type="scientific">Drosophila simulans</name>
    <name type="common">Fruit fly</name>
    <dbReference type="NCBI Taxonomy" id="7240"/>
    <lineage>
        <taxon>Eukaryota</taxon>
        <taxon>Metazoa</taxon>
        <taxon>Ecdysozoa</taxon>
        <taxon>Arthropoda</taxon>
        <taxon>Hexapoda</taxon>
        <taxon>Insecta</taxon>
        <taxon>Pterygota</taxon>
        <taxon>Neoptera</taxon>
        <taxon>Endopterygota</taxon>
        <taxon>Diptera</taxon>
        <taxon>Brachycera</taxon>
        <taxon>Muscomorpha</taxon>
        <taxon>Ephydroidea</taxon>
        <taxon>Drosophilidae</taxon>
        <taxon>Drosophila</taxon>
        <taxon>Sophophora</taxon>
    </lineage>
</organism>
<accession>B4R3T1</accession>
<keyword id="KW-0408">Iron</keyword>
<keyword id="KW-0411">Iron-sulfur</keyword>
<keyword id="KW-0479">Metal-binding</keyword>
<keyword id="KW-0496">Mitochondrion</keyword>
<keyword id="KW-1185">Reference proteome</keyword>
<keyword id="KW-0809">Transit peptide</keyword>
<reference evidence="4" key="1">
    <citation type="journal article" date="2007" name="Nature">
        <title>Evolution of genes and genomes on the Drosophila phylogeny.</title>
        <authorList>
            <consortium name="Drosophila 12 genomes consortium"/>
        </authorList>
    </citation>
    <scope>NUCLEOTIDE SEQUENCE [LARGE SCALE GENOMIC DNA]</scope>
</reference>
<dbReference type="EMBL" id="CM000366">
    <property type="protein sequence ID" value="EDX18549.1"/>
    <property type="molecule type" value="Genomic_DNA"/>
</dbReference>
<dbReference type="SMR" id="B4R3T1"/>
<dbReference type="STRING" id="7240.B4R3T1"/>
<dbReference type="EnsemblMetazoa" id="FBtr0349468">
    <property type="protein sequence ID" value="FBpp0314307"/>
    <property type="gene ID" value="FBgn0187157"/>
</dbReference>
<dbReference type="HOGENOM" id="CLU_060555_0_2_1"/>
<dbReference type="OMA" id="IFEHIME"/>
<dbReference type="OrthoDB" id="565552at2759"/>
<dbReference type="PhylomeDB" id="B4R3T1"/>
<dbReference type="Proteomes" id="UP000000304">
    <property type="component" value="Chromosome X"/>
</dbReference>
<dbReference type="Bgee" id="FBgn0187157">
    <property type="expression patterns" value="Expressed in adult organism and 3 other cell types or tissues"/>
</dbReference>
<dbReference type="GO" id="GO:0005739">
    <property type="term" value="C:mitochondrion"/>
    <property type="evidence" value="ECO:0007669"/>
    <property type="project" value="UniProtKB-SubCell"/>
</dbReference>
<dbReference type="GO" id="GO:0005506">
    <property type="term" value="F:iron ion binding"/>
    <property type="evidence" value="ECO:0007669"/>
    <property type="project" value="InterPro"/>
</dbReference>
<dbReference type="GO" id="GO:0051536">
    <property type="term" value="F:iron-sulfur cluster binding"/>
    <property type="evidence" value="ECO:0007669"/>
    <property type="project" value="UniProtKB-KW"/>
</dbReference>
<dbReference type="GO" id="GO:0016226">
    <property type="term" value="P:iron-sulfur cluster assembly"/>
    <property type="evidence" value="ECO:0007669"/>
    <property type="project" value="InterPro"/>
</dbReference>
<dbReference type="FunFam" id="3.30.300.130:FF:000001">
    <property type="entry name" value="NFU1 iron-sulfur cluster scaffold"/>
    <property type="match status" value="1"/>
</dbReference>
<dbReference type="FunFam" id="3.30.1370.70:FF:000002">
    <property type="entry name" value="NFU1 iron-sulfur cluster scaffold homolog, mitochondrial"/>
    <property type="match status" value="1"/>
</dbReference>
<dbReference type="Gene3D" id="3.30.300.130">
    <property type="entry name" value="Fe-S cluster assembly (FSCA)"/>
    <property type="match status" value="1"/>
</dbReference>
<dbReference type="Gene3D" id="3.30.1370.70">
    <property type="entry name" value="Scaffold protein Nfu/NifU, N-terminal domain"/>
    <property type="match status" value="1"/>
</dbReference>
<dbReference type="InterPro" id="IPR034904">
    <property type="entry name" value="FSCA_dom_sf"/>
</dbReference>
<dbReference type="InterPro" id="IPR014824">
    <property type="entry name" value="Nfu/NifU_N"/>
</dbReference>
<dbReference type="InterPro" id="IPR036498">
    <property type="entry name" value="Nfu/NifU_N_sf"/>
</dbReference>
<dbReference type="InterPro" id="IPR001075">
    <property type="entry name" value="NIF_FeS_clus_asmbl_NifU_C"/>
</dbReference>
<dbReference type="InterPro" id="IPR000629">
    <property type="entry name" value="RNA-helicase_DEAD-box_CS"/>
</dbReference>
<dbReference type="PANTHER" id="PTHR11178">
    <property type="entry name" value="IRON-SULFUR CLUSTER SCAFFOLD PROTEIN NFU-RELATED"/>
    <property type="match status" value="1"/>
</dbReference>
<dbReference type="PANTHER" id="PTHR11178:SF1">
    <property type="entry name" value="NFU1 IRON-SULFUR CLUSTER SCAFFOLD HOMOLOG, MITOCHONDRIAL"/>
    <property type="match status" value="1"/>
</dbReference>
<dbReference type="Pfam" id="PF08712">
    <property type="entry name" value="Nfu_N"/>
    <property type="match status" value="1"/>
</dbReference>
<dbReference type="Pfam" id="PF01106">
    <property type="entry name" value="NifU"/>
    <property type="match status" value="1"/>
</dbReference>
<dbReference type="SMART" id="SM00932">
    <property type="entry name" value="Nfu_N"/>
    <property type="match status" value="1"/>
</dbReference>
<dbReference type="SUPFAM" id="SSF117916">
    <property type="entry name" value="Fe-S cluster assembly (FSCA) domain-like"/>
    <property type="match status" value="1"/>
</dbReference>
<dbReference type="SUPFAM" id="SSF110836">
    <property type="entry name" value="Hypothetical protein SAV1430"/>
    <property type="match status" value="1"/>
</dbReference>
<evidence type="ECO:0000250" key="1">
    <source>
        <dbReference type="UniProtKB" id="Q9UMS0"/>
    </source>
</evidence>
<evidence type="ECO:0000255" key="2"/>
<evidence type="ECO:0000305" key="3"/>
<evidence type="ECO:0000312" key="4">
    <source>
        <dbReference type="EMBL" id="EDX18549.1"/>
    </source>
</evidence>
<sequence>MSKFLSQAAINTLRNTRLGSRQLVRSFAGISNTRNHRGAGHQEWGCGQSAERGLLELRMPVACRRSMFIQTQDTPNPESLKFLPGVDVLGKGNTYDFPHGTTAHSSPLAKLLFRVEGVKGVFFGADFITISKQEGAEWSLIKPEVFAVIMDFFASGLPVLNDAQPNADTEILEDDDETVMMIKELLDTRIRPTVQEDGGDIVFMGYEAGVVKLKMQGSCSSCPSSIVTLKNGVQNMLQFYIPEVESVEQVFDEADRMIDSEFERFEKNLKTLKQQGPSGGGPH</sequence>
<feature type="transit peptide" description="Mitochondrion" evidence="2">
    <location>
        <begin position="1"/>
        <end position="65"/>
    </location>
</feature>
<feature type="chain" id="PRO_0000388702" description="NFU1 iron-sulfur cluster scaffold homolog, mitochondrial" evidence="2">
    <location>
        <begin position="66"/>
        <end position="283"/>
    </location>
</feature>
<feature type="region of interest" description="NifU" evidence="2">
    <location>
        <begin position="182"/>
        <end position="250"/>
    </location>
</feature>
<feature type="binding site" evidence="1">
    <location>
        <position position="219"/>
    </location>
    <ligand>
        <name>[4Fe-4S] cluster</name>
        <dbReference type="ChEBI" id="CHEBI:49883"/>
        <note>ligand shared between dimeric partners</note>
    </ligand>
</feature>
<feature type="binding site" evidence="1">
    <location>
        <position position="222"/>
    </location>
    <ligand>
        <name>[4Fe-4S] cluster</name>
        <dbReference type="ChEBI" id="CHEBI:49883"/>
        <note>ligand shared between dimeric partners</note>
    </ligand>
</feature>
<comment type="function">
    <text evidence="1">Molecular scaffold for [Fe-S] cluster assembly of mitochondrial iron-sulfur proteins.</text>
</comment>
<comment type="subcellular location">
    <subcellularLocation>
        <location evidence="2">Mitochondrion</location>
    </subcellularLocation>
</comment>
<comment type="similarity">
    <text evidence="3">Belongs to the NifU family.</text>
</comment>
<proteinExistence type="inferred from homology"/>
<gene>
    <name type="ORF">GD15490</name>
</gene>
<protein>
    <recommendedName>
        <fullName evidence="1">NFU1 iron-sulfur cluster scaffold homolog, mitochondrial</fullName>
    </recommendedName>
</protein>
<name>NFU1_DROSI</name>